<feature type="chain" id="PRO_0000298522" description="NADH-quinone oxidoreductase subunit I">
    <location>
        <begin position="1"/>
        <end position="159"/>
    </location>
</feature>
<feature type="domain" description="4Fe-4S ferredoxin-type 1" evidence="1">
    <location>
        <begin position="50"/>
        <end position="80"/>
    </location>
</feature>
<feature type="domain" description="4Fe-4S ferredoxin-type 2" evidence="1">
    <location>
        <begin position="90"/>
        <end position="119"/>
    </location>
</feature>
<feature type="binding site" evidence="1">
    <location>
        <position position="60"/>
    </location>
    <ligand>
        <name>[4Fe-4S] cluster</name>
        <dbReference type="ChEBI" id="CHEBI:49883"/>
        <label>1</label>
    </ligand>
</feature>
<feature type="binding site" evidence="1">
    <location>
        <position position="63"/>
    </location>
    <ligand>
        <name>[4Fe-4S] cluster</name>
        <dbReference type="ChEBI" id="CHEBI:49883"/>
        <label>1</label>
    </ligand>
</feature>
<feature type="binding site" evidence="1">
    <location>
        <position position="66"/>
    </location>
    <ligand>
        <name>[4Fe-4S] cluster</name>
        <dbReference type="ChEBI" id="CHEBI:49883"/>
        <label>1</label>
    </ligand>
</feature>
<feature type="binding site" evidence="1">
    <location>
        <position position="70"/>
    </location>
    <ligand>
        <name>[4Fe-4S] cluster</name>
        <dbReference type="ChEBI" id="CHEBI:49883"/>
        <label>2</label>
    </ligand>
</feature>
<feature type="binding site" evidence="1">
    <location>
        <position position="99"/>
    </location>
    <ligand>
        <name>[4Fe-4S] cluster</name>
        <dbReference type="ChEBI" id="CHEBI:49883"/>
        <label>2</label>
    </ligand>
</feature>
<feature type="binding site" evidence="1">
    <location>
        <position position="102"/>
    </location>
    <ligand>
        <name>[4Fe-4S] cluster</name>
        <dbReference type="ChEBI" id="CHEBI:49883"/>
        <label>2</label>
    </ligand>
</feature>
<feature type="binding site" evidence="1">
    <location>
        <position position="105"/>
    </location>
    <ligand>
        <name>[4Fe-4S] cluster</name>
        <dbReference type="ChEBI" id="CHEBI:49883"/>
        <label>2</label>
    </ligand>
</feature>
<feature type="binding site" evidence="1">
    <location>
        <position position="109"/>
    </location>
    <ligand>
        <name>[4Fe-4S] cluster</name>
        <dbReference type="ChEBI" id="CHEBI:49883"/>
        <label>1</label>
    </ligand>
</feature>
<keyword id="KW-0004">4Fe-4S</keyword>
<keyword id="KW-0997">Cell inner membrane</keyword>
<keyword id="KW-1003">Cell membrane</keyword>
<keyword id="KW-0408">Iron</keyword>
<keyword id="KW-0411">Iron-sulfur</keyword>
<keyword id="KW-0472">Membrane</keyword>
<keyword id="KW-0479">Metal-binding</keyword>
<keyword id="KW-0520">NAD</keyword>
<keyword id="KW-0874">Quinone</keyword>
<keyword id="KW-0677">Repeat</keyword>
<keyword id="KW-1278">Translocase</keyword>
<keyword id="KW-0830">Ubiquinone</keyword>
<name>NUOI_NEIMF</name>
<sequence length="159" mass="18156">MANLVKTFLLGELVKGMGVTLKNFFARKDTIYFPEEKTPQSVRFRGLHAQRRYPNGEERCIACKLCEAVCPAMAINIESEEREDGTRRTKRYDIDLTKCIFCGFCEEACPTDAIVETHIFEYHGEKKGDLHMTKPILLAIGDKYEAEIAKRKAADAPYR</sequence>
<comment type="function">
    <text evidence="1">NDH-1 shuttles electrons from NADH, via FMN and iron-sulfur (Fe-S) centers, to quinones in the respiratory chain. The immediate electron acceptor for the enzyme in this species is believed to be ubiquinone. Couples the redox reaction to proton translocation (for every two electrons transferred, four hydrogen ions are translocated across the cytoplasmic membrane), and thus conserves the redox energy in a proton gradient.</text>
</comment>
<comment type="catalytic activity">
    <reaction evidence="1">
        <text>a quinone + NADH + 5 H(+)(in) = a quinol + NAD(+) + 4 H(+)(out)</text>
        <dbReference type="Rhea" id="RHEA:57888"/>
        <dbReference type="ChEBI" id="CHEBI:15378"/>
        <dbReference type="ChEBI" id="CHEBI:24646"/>
        <dbReference type="ChEBI" id="CHEBI:57540"/>
        <dbReference type="ChEBI" id="CHEBI:57945"/>
        <dbReference type="ChEBI" id="CHEBI:132124"/>
    </reaction>
</comment>
<comment type="cofactor">
    <cofactor evidence="1">
        <name>[4Fe-4S] cluster</name>
        <dbReference type="ChEBI" id="CHEBI:49883"/>
    </cofactor>
    <text evidence="1">Binds 2 [4Fe-4S] clusters per subunit.</text>
</comment>
<comment type="subunit">
    <text evidence="1">NDH-1 is composed of 14 different subunits. Subunits NuoA, H, J, K, L, M, N constitute the membrane sector of the complex.</text>
</comment>
<comment type="subcellular location">
    <subcellularLocation>
        <location evidence="1">Cell inner membrane</location>
        <topology evidence="1">Peripheral membrane protein</topology>
    </subcellularLocation>
</comment>
<comment type="similarity">
    <text evidence="1">Belongs to the complex I 23 kDa subunit family.</text>
</comment>
<gene>
    <name evidence="1" type="primary">nuoI</name>
    <name type="ordered locus">NMC0246</name>
</gene>
<evidence type="ECO:0000255" key="1">
    <source>
        <dbReference type="HAMAP-Rule" id="MF_01351"/>
    </source>
</evidence>
<accession>A1KRT1</accession>
<dbReference type="EC" id="7.1.1.-" evidence="1"/>
<dbReference type="EMBL" id="AM421808">
    <property type="protein sequence ID" value="CAM09560.1"/>
    <property type="molecule type" value="Genomic_DNA"/>
</dbReference>
<dbReference type="RefSeq" id="WP_002216341.1">
    <property type="nucleotide sequence ID" value="NC_008767.1"/>
</dbReference>
<dbReference type="SMR" id="A1KRT1"/>
<dbReference type="GeneID" id="93387338"/>
<dbReference type="KEGG" id="nmc:NMC0246"/>
<dbReference type="HOGENOM" id="CLU_067218_5_1_4"/>
<dbReference type="Proteomes" id="UP000002286">
    <property type="component" value="Chromosome"/>
</dbReference>
<dbReference type="GO" id="GO:0005886">
    <property type="term" value="C:plasma membrane"/>
    <property type="evidence" value="ECO:0007669"/>
    <property type="project" value="UniProtKB-SubCell"/>
</dbReference>
<dbReference type="GO" id="GO:0051539">
    <property type="term" value="F:4 iron, 4 sulfur cluster binding"/>
    <property type="evidence" value="ECO:0007669"/>
    <property type="project" value="UniProtKB-KW"/>
</dbReference>
<dbReference type="GO" id="GO:0005506">
    <property type="term" value="F:iron ion binding"/>
    <property type="evidence" value="ECO:0007669"/>
    <property type="project" value="UniProtKB-UniRule"/>
</dbReference>
<dbReference type="GO" id="GO:0050136">
    <property type="term" value="F:NADH:ubiquinone reductase (non-electrogenic) activity"/>
    <property type="evidence" value="ECO:0007669"/>
    <property type="project" value="UniProtKB-UniRule"/>
</dbReference>
<dbReference type="GO" id="GO:0048038">
    <property type="term" value="F:quinone binding"/>
    <property type="evidence" value="ECO:0007669"/>
    <property type="project" value="UniProtKB-KW"/>
</dbReference>
<dbReference type="GO" id="GO:0009060">
    <property type="term" value="P:aerobic respiration"/>
    <property type="evidence" value="ECO:0007669"/>
    <property type="project" value="TreeGrafter"/>
</dbReference>
<dbReference type="FunFam" id="3.30.70.3270:FF:000003">
    <property type="entry name" value="NADH-quinone oxidoreductase subunit I"/>
    <property type="match status" value="1"/>
</dbReference>
<dbReference type="Gene3D" id="3.30.70.3270">
    <property type="match status" value="1"/>
</dbReference>
<dbReference type="HAMAP" id="MF_01351">
    <property type="entry name" value="NDH1_NuoI"/>
    <property type="match status" value="1"/>
</dbReference>
<dbReference type="InterPro" id="IPR017896">
    <property type="entry name" value="4Fe4S_Fe-S-bd"/>
</dbReference>
<dbReference type="InterPro" id="IPR017900">
    <property type="entry name" value="4Fe4S_Fe_S_CS"/>
</dbReference>
<dbReference type="InterPro" id="IPR010226">
    <property type="entry name" value="NADH_quinone_OxRdtase_chainI"/>
</dbReference>
<dbReference type="NCBIfam" id="TIGR01971">
    <property type="entry name" value="NuoI"/>
    <property type="match status" value="1"/>
</dbReference>
<dbReference type="NCBIfam" id="NF004538">
    <property type="entry name" value="PRK05888.1-4"/>
    <property type="match status" value="1"/>
</dbReference>
<dbReference type="NCBIfam" id="NF004539">
    <property type="entry name" value="PRK05888.1-5"/>
    <property type="match status" value="1"/>
</dbReference>
<dbReference type="PANTHER" id="PTHR10849:SF20">
    <property type="entry name" value="NADH DEHYDROGENASE [UBIQUINONE] IRON-SULFUR PROTEIN 8, MITOCHONDRIAL"/>
    <property type="match status" value="1"/>
</dbReference>
<dbReference type="PANTHER" id="PTHR10849">
    <property type="entry name" value="NADH DEHYDROGENASE UBIQUINONE IRON-SULFUR PROTEIN 8, MITOCHONDRIAL"/>
    <property type="match status" value="1"/>
</dbReference>
<dbReference type="Pfam" id="PF12838">
    <property type="entry name" value="Fer4_7"/>
    <property type="match status" value="1"/>
</dbReference>
<dbReference type="SUPFAM" id="SSF54862">
    <property type="entry name" value="4Fe-4S ferredoxins"/>
    <property type="match status" value="1"/>
</dbReference>
<dbReference type="PROSITE" id="PS00198">
    <property type="entry name" value="4FE4S_FER_1"/>
    <property type="match status" value="2"/>
</dbReference>
<dbReference type="PROSITE" id="PS51379">
    <property type="entry name" value="4FE4S_FER_2"/>
    <property type="match status" value="2"/>
</dbReference>
<protein>
    <recommendedName>
        <fullName evidence="1">NADH-quinone oxidoreductase subunit I</fullName>
        <ecNumber evidence="1">7.1.1.-</ecNumber>
    </recommendedName>
    <alternativeName>
        <fullName evidence="1">NADH dehydrogenase I subunit I</fullName>
    </alternativeName>
    <alternativeName>
        <fullName evidence="1">NDH-1 subunit I</fullName>
    </alternativeName>
</protein>
<organism>
    <name type="scientific">Neisseria meningitidis serogroup C / serotype 2a (strain ATCC 700532 / DSM 15464 / FAM18)</name>
    <dbReference type="NCBI Taxonomy" id="272831"/>
    <lineage>
        <taxon>Bacteria</taxon>
        <taxon>Pseudomonadati</taxon>
        <taxon>Pseudomonadota</taxon>
        <taxon>Betaproteobacteria</taxon>
        <taxon>Neisseriales</taxon>
        <taxon>Neisseriaceae</taxon>
        <taxon>Neisseria</taxon>
    </lineage>
</organism>
<reference key="1">
    <citation type="journal article" date="2007" name="PLoS Genet.">
        <title>Meningococcal genetic variation mechanisms viewed through comparative analysis of serogroup C strain FAM18.</title>
        <authorList>
            <person name="Bentley S.D."/>
            <person name="Vernikos G.S."/>
            <person name="Snyder L.A.S."/>
            <person name="Churcher C."/>
            <person name="Arrowsmith C."/>
            <person name="Chillingworth T."/>
            <person name="Cronin A."/>
            <person name="Davis P.H."/>
            <person name="Holroyd N.E."/>
            <person name="Jagels K."/>
            <person name="Maddison M."/>
            <person name="Moule S."/>
            <person name="Rabbinowitsch E."/>
            <person name="Sharp S."/>
            <person name="Unwin L."/>
            <person name="Whitehead S."/>
            <person name="Quail M.A."/>
            <person name="Achtman M."/>
            <person name="Barrell B.G."/>
            <person name="Saunders N.J."/>
            <person name="Parkhill J."/>
        </authorList>
    </citation>
    <scope>NUCLEOTIDE SEQUENCE [LARGE SCALE GENOMIC DNA]</scope>
    <source>
        <strain>ATCC 700532 / DSM 15464 / FAM18</strain>
    </source>
</reference>
<proteinExistence type="inferred from homology"/>